<accession>P62601</accession>
<accession>P37196</accession>
<accession>Q2M7I1</accession>
<comment type="function">
    <text>Hydrolyzes trehalose to glucose. Could be involved, in cells returning to low osmolarity conditions, in the utilization of the accumulated cytoplasmic trehalose, which was synthesized in response to high osmolarity.</text>
</comment>
<comment type="catalytic activity">
    <reaction evidence="1">
        <text>alpha,alpha-trehalose + H2O = alpha-D-glucose + beta-D-glucose</text>
        <dbReference type="Rhea" id="RHEA:32675"/>
        <dbReference type="ChEBI" id="CHEBI:15377"/>
        <dbReference type="ChEBI" id="CHEBI:15903"/>
        <dbReference type="ChEBI" id="CHEBI:16551"/>
        <dbReference type="ChEBI" id="CHEBI:17925"/>
        <dbReference type="EC" id="3.2.1.28"/>
    </reaction>
</comment>
<comment type="activity regulation">
    <text>Activity decreases with increasing salt concentrations.</text>
</comment>
<comment type="biophysicochemical properties">
    <phDependence>
        <text>Optimum pH is 6.0.</text>
    </phDependence>
</comment>
<comment type="pathway">
    <text evidence="1">Glycan degradation; trehalose degradation; D-glucose from alpha,alpha-trehalose: step 1/1.</text>
</comment>
<comment type="subunit">
    <text evidence="3">Monomer.</text>
</comment>
<comment type="subcellular location">
    <subcellularLocation>
        <location evidence="1 2">Cytoplasm</location>
    </subcellularLocation>
</comment>
<comment type="induction">
    <text>Weakly induced by high osmolarity but not by trehalose. Expression is partially dependent on RpoS.</text>
</comment>
<comment type="similarity">
    <text evidence="1">Belongs to the glycosyl hydrolase 37 family.</text>
</comment>
<name>TREF_ECOLI</name>
<proteinExistence type="evidence at protein level"/>
<sequence length="549" mass="63697">MLNQKIQNPNPDELMIEVDLCYELDPYELKLDEMIEAEPEPEMIEGLPASDALTPADRYLELFEHVQSAKIFPDSKTFPDCAPKMDPLDILIRYRKVRRHRDFDLRKFVENHFWLPEVYSSEYVSDPQNSLKEHIDQLWPVLTREPQDHIPWSSLLALPQSYIVPGGRFSETYYWDSYFTMLGLAESGREDLLKCMADNFAWMIENYGHIPNGNRTYYLSRSQPPVFALMVELFEEDGVRGARRYLDHLKMEYAFWMDGAESLIPNQAYRHVVRMPDGSLLNRYWDDRDTPRDESWLEDVETAKHSGRPPNEVYRDLRAGAASGWDYSSRWLRDTGRLASIRTTQFIPIDLNAFLFKLESAIANISALKGEKETEALFRQKASARRDAVNRYLWDDENGIYRDYDWRREQLALFSAAAIVPLYVGMANHEQADRLANAVRSRLLTPGGILASEYETGEQWDKPNGWAPLQWMAIQGFKMYGDDLLGDEIARSWLKTVNQFYLEQHKLIEKYHIADGVPREGGGGEYPLQDGFGWTNGVVRRLIGLYGEP</sequence>
<keyword id="KW-0963">Cytoplasm</keyword>
<keyword id="KW-0903">Direct protein sequencing</keyword>
<keyword id="KW-0326">Glycosidase</keyword>
<keyword id="KW-0378">Hydrolase</keyword>
<keyword id="KW-1185">Reference proteome</keyword>
<evidence type="ECO:0000255" key="1">
    <source>
        <dbReference type="HAMAP-Rule" id="MF_01059"/>
    </source>
</evidence>
<evidence type="ECO:0000269" key="2">
    <source>
    </source>
</evidence>
<evidence type="ECO:0000305" key="3"/>
<reference key="1">
    <citation type="journal article" date="1994" name="Nucleic Acids Res.">
        <title>Analysis of the Escherichia coli genome. V. DNA sequence of the region from 76.0 to 81.5 minutes.</title>
        <authorList>
            <person name="Sofia H.J."/>
            <person name="Burland V."/>
            <person name="Daniels D.L."/>
            <person name="Plunkett G. III"/>
            <person name="Blattner F.R."/>
        </authorList>
    </citation>
    <scope>NUCLEOTIDE SEQUENCE [LARGE SCALE GENOMIC DNA]</scope>
    <source>
        <strain>K12 / MG1655 / ATCC 47076</strain>
    </source>
</reference>
<reference key="2">
    <citation type="journal article" date="1997" name="Science">
        <title>The complete genome sequence of Escherichia coli K-12.</title>
        <authorList>
            <person name="Blattner F.R."/>
            <person name="Plunkett G. III"/>
            <person name="Bloch C.A."/>
            <person name="Perna N.T."/>
            <person name="Burland V."/>
            <person name="Riley M."/>
            <person name="Collado-Vides J."/>
            <person name="Glasner J.D."/>
            <person name="Rode C.K."/>
            <person name="Mayhew G.F."/>
            <person name="Gregor J."/>
            <person name="Davis N.W."/>
            <person name="Kirkpatrick H.A."/>
            <person name="Goeden M.A."/>
            <person name="Rose D.J."/>
            <person name="Mau B."/>
            <person name="Shao Y."/>
        </authorList>
    </citation>
    <scope>NUCLEOTIDE SEQUENCE [LARGE SCALE GENOMIC DNA]</scope>
    <source>
        <strain>K12 / MG1655 / ATCC 47076</strain>
    </source>
</reference>
<reference key="3">
    <citation type="journal article" date="2006" name="Mol. Syst. Biol.">
        <title>Highly accurate genome sequences of Escherichia coli K-12 strains MG1655 and W3110.</title>
        <authorList>
            <person name="Hayashi K."/>
            <person name="Morooka N."/>
            <person name="Yamamoto Y."/>
            <person name="Fujita K."/>
            <person name="Isono K."/>
            <person name="Choi S."/>
            <person name="Ohtsubo E."/>
            <person name="Baba T."/>
            <person name="Wanner B.L."/>
            <person name="Mori H."/>
            <person name="Horiuchi T."/>
        </authorList>
    </citation>
    <scope>NUCLEOTIDE SEQUENCE [LARGE SCALE GENOMIC DNA]</scope>
    <source>
        <strain>K12 / W3110 / ATCC 27325 / DSM 5911</strain>
    </source>
</reference>
<reference key="4">
    <citation type="journal article" date="1996" name="J. Bacteriol.">
        <title>Characterization of a cytoplasmic trehalase of Escherichia coli.</title>
        <authorList>
            <person name="Horlacher R."/>
            <person name="Uhland K."/>
            <person name="Klein W."/>
            <person name="Ehrmann M."/>
            <person name="Boos W."/>
        </authorList>
    </citation>
    <scope>CHARACTERIZATION</scope>
    <scope>PROTEIN SEQUENCE OF N-TERMINUS</scope>
    <source>
        <strain>DHB4</strain>
        <strain>K12 / MC4100 / ATCC 35695 / DSM 6574</strain>
    </source>
</reference>
<reference key="5">
    <citation type="journal article" date="2000" name="J. Biol. Chem.">
        <title>Determinants of translocation and folding of TreF, a trehalase of Escherichia coli.</title>
        <authorList>
            <person name="Uhland K."/>
            <person name="Mondigler M."/>
            <person name="Spiess C."/>
            <person name="Prinz W."/>
            <person name="Ehrmann M."/>
        </authorList>
    </citation>
    <scope>SUBCELLULAR LOCATION</scope>
    <source>
        <strain>DHB3</strain>
        <strain>K12 / MC4100 / ATCC 35695 / DSM 6574</strain>
    </source>
</reference>
<organism>
    <name type="scientific">Escherichia coli (strain K12)</name>
    <dbReference type="NCBI Taxonomy" id="83333"/>
    <lineage>
        <taxon>Bacteria</taxon>
        <taxon>Pseudomonadati</taxon>
        <taxon>Pseudomonadota</taxon>
        <taxon>Gammaproteobacteria</taxon>
        <taxon>Enterobacterales</taxon>
        <taxon>Enterobacteriaceae</taxon>
        <taxon>Escherichia</taxon>
    </lineage>
</organism>
<gene>
    <name evidence="1" type="primary">treF</name>
    <name type="ordered locus">b3519</name>
    <name type="ordered locus">JW3487</name>
</gene>
<feature type="chain" id="PRO_0000173786" description="Cytoplasmic trehalase">
    <location>
        <begin position="1"/>
        <end position="549"/>
    </location>
</feature>
<feature type="active site" description="Proton donor/acceptor" evidence="1">
    <location>
        <position position="326"/>
    </location>
</feature>
<feature type="active site" description="Proton donor/acceptor" evidence="1">
    <location>
        <position position="509"/>
    </location>
</feature>
<feature type="binding site" evidence="1">
    <location>
        <position position="168"/>
    </location>
    <ligand>
        <name>substrate</name>
    </ligand>
</feature>
<feature type="binding site" evidence="1">
    <location>
        <begin position="175"/>
        <end position="176"/>
    </location>
    <ligand>
        <name>substrate</name>
    </ligand>
</feature>
<feature type="binding site" evidence="1">
    <location>
        <position position="212"/>
    </location>
    <ligand>
        <name>substrate</name>
    </ligand>
</feature>
<feature type="binding site" evidence="1">
    <location>
        <begin position="221"/>
        <end position="223"/>
    </location>
    <ligand>
        <name>substrate</name>
    </ligand>
</feature>
<feature type="binding site" evidence="1">
    <location>
        <begin position="292"/>
        <end position="294"/>
    </location>
    <ligand>
        <name>substrate</name>
    </ligand>
</feature>
<feature type="binding site" evidence="1">
    <location>
        <position position="324"/>
    </location>
    <ligand>
        <name>substrate</name>
    </ligand>
</feature>
<feature type="binding site" evidence="1">
    <location>
        <position position="525"/>
    </location>
    <ligand>
        <name>substrate</name>
    </ligand>
</feature>
<protein>
    <recommendedName>
        <fullName evidence="1">Cytoplasmic trehalase</fullName>
        <ecNumber evidence="1">3.2.1.28</ecNumber>
    </recommendedName>
    <alternativeName>
        <fullName evidence="1">Alpha,alpha-trehalase</fullName>
    </alternativeName>
    <alternativeName>
        <fullName evidence="1">Alpha,alpha-trehalose glucohydrolase</fullName>
    </alternativeName>
</protein>
<dbReference type="EC" id="3.2.1.28" evidence="1"/>
<dbReference type="EMBL" id="U00039">
    <property type="protein sequence ID" value="AAB18495.1"/>
    <property type="molecule type" value="Genomic_DNA"/>
</dbReference>
<dbReference type="EMBL" id="U00096">
    <property type="protein sequence ID" value="AAC76544.1"/>
    <property type="molecule type" value="Genomic_DNA"/>
</dbReference>
<dbReference type="EMBL" id="AP009048">
    <property type="protein sequence ID" value="BAE77775.1"/>
    <property type="molecule type" value="Genomic_DNA"/>
</dbReference>
<dbReference type="PIR" id="S47739">
    <property type="entry name" value="S47739"/>
</dbReference>
<dbReference type="RefSeq" id="NP_417976.1">
    <property type="nucleotide sequence ID" value="NC_000913.3"/>
</dbReference>
<dbReference type="RefSeq" id="WP_000934216.1">
    <property type="nucleotide sequence ID" value="NZ_SSZK01000039.1"/>
</dbReference>
<dbReference type="SMR" id="P62601"/>
<dbReference type="BioGRID" id="4260775">
    <property type="interactions" value="15"/>
</dbReference>
<dbReference type="FunCoup" id="P62601">
    <property type="interactions" value="462"/>
</dbReference>
<dbReference type="IntAct" id="P62601">
    <property type="interactions" value="2"/>
</dbReference>
<dbReference type="STRING" id="511145.b3519"/>
<dbReference type="jPOST" id="P62601"/>
<dbReference type="PaxDb" id="511145-b3519"/>
<dbReference type="EnsemblBacteria" id="AAC76544">
    <property type="protein sequence ID" value="AAC76544"/>
    <property type="gene ID" value="b3519"/>
</dbReference>
<dbReference type="GeneID" id="948037"/>
<dbReference type="KEGG" id="ecj:JW3487"/>
<dbReference type="KEGG" id="eco:b3519"/>
<dbReference type="KEGG" id="ecoc:C3026_19065"/>
<dbReference type="PATRIC" id="fig|1411691.4.peg.3199"/>
<dbReference type="EchoBASE" id="EB2156"/>
<dbReference type="eggNOG" id="COG1626">
    <property type="taxonomic scope" value="Bacteria"/>
</dbReference>
<dbReference type="HOGENOM" id="CLU_006451_3_1_6"/>
<dbReference type="InParanoid" id="P62601"/>
<dbReference type="OMA" id="DAPFGWA"/>
<dbReference type="OrthoDB" id="106887at2"/>
<dbReference type="PhylomeDB" id="P62601"/>
<dbReference type="BioCyc" id="EcoCyc:TREHALACYTO-MONOMER"/>
<dbReference type="BioCyc" id="MetaCyc:TREHALACYTO-MONOMER"/>
<dbReference type="UniPathway" id="UPA00300">
    <property type="reaction ID" value="UER00535"/>
</dbReference>
<dbReference type="PRO" id="PR:P62601"/>
<dbReference type="Proteomes" id="UP000000625">
    <property type="component" value="Chromosome"/>
</dbReference>
<dbReference type="GO" id="GO:0005737">
    <property type="term" value="C:cytoplasm"/>
    <property type="evidence" value="ECO:0007669"/>
    <property type="project" value="UniProtKB-SubCell"/>
</dbReference>
<dbReference type="GO" id="GO:0004555">
    <property type="term" value="F:alpha,alpha-trehalase activity"/>
    <property type="evidence" value="ECO:0000314"/>
    <property type="project" value="EcoCyc"/>
</dbReference>
<dbReference type="GO" id="GO:0071474">
    <property type="term" value="P:cellular hyperosmotic response"/>
    <property type="evidence" value="ECO:0000270"/>
    <property type="project" value="EcoCyc"/>
</dbReference>
<dbReference type="GO" id="GO:0005993">
    <property type="term" value="P:trehalose catabolic process"/>
    <property type="evidence" value="ECO:0000315"/>
    <property type="project" value="EcoCyc"/>
</dbReference>
<dbReference type="FunFam" id="1.50.10.10:FF:000003">
    <property type="entry name" value="Cytoplasmic trehalase"/>
    <property type="match status" value="1"/>
</dbReference>
<dbReference type="Gene3D" id="1.50.10.10">
    <property type="match status" value="1"/>
</dbReference>
<dbReference type="HAMAP" id="MF_01059">
    <property type="entry name" value="Cyt_trehalase"/>
    <property type="match status" value="1"/>
</dbReference>
<dbReference type="InterPro" id="IPR008928">
    <property type="entry name" value="6-hairpin_glycosidase_sf"/>
</dbReference>
<dbReference type="InterPro" id="IPR012341">
    <property type="entry name" value="6hp_glycosidase-like_sf"/>
</dbReference>
<dbReference type="InterPro" id="IPR023715">
    <property type="entry name" value="Cyt_trehalase"/>
</dbReference>
<dbReference type="InterPro" id="IPR001661">
    <property type="entry name" value="Glyco_hydro_37"/>
</dbReference>
<dbReference type="InterPro" id="IPR018232">
    <property type="entry name" value="Glyco_hydro_37_CS"/>
</dbReference>
<dbReference type="NCBIfam" id="NF009773">
    <property type="entry name" value="PRK13270.1"/>
    <property type="match status" value="1"/>
</dbReference>
<dbReference type="NCBIfam" id="NF009774">
    <property type="entry name" value="PRK13271.1"/>
    <property type="match status" value="1"/>
</dbReference>
<dbReference type="PANTHER" id="PTHR23403:SF8">
    <property type="entry name" value="CYTOPLASMIC TREHALASE"/>
    <property type="match status" value="1"/>
</dbReference>
<dbReference type="PANTHER" id="PTHR23403">
    <property type="entry name" value="TREHALASE"/>
    <property type="match status" value="1"/>
</dbReference>
<dbReference type="Pfam" id="PF01204">
    <property type="entry name" value="Trehalase"/>
    <property type="match status" value="1"/>
</dbReference>
<dbReference type="PRINTS" id="PR00744">
    <property type="entry name" value="GLHYDRLASE37"/>
</dbReference>
<dbReference type="SUPFAM" id="SSF48208">
    <property type="entry name" value="Six-hairpin glycosidases"/>
    <property type="match status" value="1"/>
</dbReference>
<dbReference type="PROSITE" id="PS00927">
    <property type="entry name" value="TREHALASE_1"/>
    <property type="match status" value="1"/>
</dbReference>
<dbReference type="PROSITE" id="PS00928">
    <property type="entry name" value="TREHALASE_2"/>
    <property type="match status" value="1"/>
</dbReference>